<sequence>MIVKVKVKPNAKKEEIREIQKDYFEIRVTVPPEKGKANSRVIELLSKHLKIPKSRIKLKKGEKSREKIFEIID</sequence>
<organism>
    <name type="scientific">Persephonella marina (strain DSM 14350 / EX-H1)</name>
    <dbReference type="NCBI Taxonomy" id="123214"/>
    <lineage>
        <taxon>Bacteria</taxon>
        <taxon>Pseudomonadati</taxon>
        <taxon>Aquificota</taxon>
        <taxon>Aquificia</taxon>
        <taxon>Aquificales</taxon>
        <taxon>Hydrogenothermaceae</taxon>
        <taxon>Persephonella</taxon>
    </lineage>
</organism>
<protein>
    <recommendedName>
        <fullName evidence="1">UPF0235 protein PERMA_1406</fullName>
    </recommendedName>
</protein>
<accession>C0QR78</accession>
<comment type="similarity">
    <text evidence="1">Belongs to the UPF0235 family.</text>
</comment>
<dbReference type="EMBL" id="CP001230">
    <property type="protein sequence ID" value="ACO03577.1"/>
    <property type="molecule type" value="Genomic_DNA"/>
</dbReference>
<dbReference type="RefSeq" id="WP_012675816.1">
    <property type="nucleotide sequence ID" value="NC_012440.1"/>
</dbReference>
<dbReference type="SMR" id="C0QR78"/>
<dbReference type="STRING" id="123214.PERMA_1406"/>
<dbReference type="PaxDb" id="123214-PERMA_1406"/>
<dbReference type="KEGG" id="pmx:PERMA_1406"/>
<dbReference type="eggNOG" id="COG1872">
    <property type="taxonomic scope" value="Bacteria"/>
</dbReference>
<dbReference type="HOGENOM" id="CLU_130694_5_3_0"/>
<dbReference type="OrthoDB" id="3176309at2"/>
<dbReference type="Proteomes" id="UP000001366">
    <property type="component" value="Chromosome"/>
</dbReference>
<dbReference type="GO" id="GO:0005737">
    <property type="term" value="C:cytoplasm"/>
    <property type="evidence" value="ECO:0007669"/>
    <property type="project" value="TreeGrafter"/>
</dbReference>
<dbReference type="Gene3D" id="3.30.1200.10">
    <property type="entry name" value="YggU-like"/>
    <property type="match status" value="1"/>
</dbReference>
<dbReference type="HAMAP" id="MF_00634">
    <property type="entry name" value="UPF0235"/>
    <property type="match status" value="1"/>
</dbReference>
<dbReference type="InterPro" id="IPR003746">
    <property type="entry name" value="DUF167"/>
</dbReference>
<dbReference type="InterPro" id="IPR036591">
    <property type="entry name" value="YggU-like_sf"/>
</dbReference>
<dbReference type="NCBIfam" id="TIGR00251">
    <property type="entry name" value="DUF167 family protein"/>
    <property type="match status" value="1"/>
</dbReference>
<dbReference type="PANTHER" id="PTHR13420">
    <property type="entry name" value="UPF0235 PROTEIN C15ORF40"/>
    <property type="match status" value="1"/>
</dbReference>
<dbReference type="PANTHER" id="PTHR13420:SF7">
    <property type="entry name" value="UPF0235 PROTEIN C15ORF40"/>
    <property type="match status" value="1"/>
</dbReference>
<dbReference type="Pfam" id="PF02594">
    <property type="entry name" value="DUF167"/>
    <property type="match status" value="1"/>
</dbReference>
<dbReference type="SMART" id="SM01152">
    <property type="entry name" value="DUF167"/>
    <property type="match status" value="1"/>
</dbReference>
<dbReference type="SUPFAM" id="SSF69786">
    <property type="entry name" value="YggU-like"/>
    <property type="match status" value="1"/>
</dbReference>
<name>Y1406_PERMH</name>
<gene>
    <name type="ordered locus">PERMA_1406</name>
</gene>
<evidence type="ECO:0000255" key="1">
    <source>
        <dbReference type="HAMAP-Rule" id="MF_00634"/>
    </source>
</evidence>
<proteinExistence type="inferred from homology"/>
<reference key="1">
    <citation type="journal article" date="2009" name="J. Bacteriol.">
        <title>Complete and draft genome sequences of six members of the Aquificales.</title>
        <authorList>
            <person name="Reysenbach A.-L."/>
            <person name="Hamamura N."/>
            <person name="Podar M."/>
            <person name="Griffiths E."/>
            <person name="Ferreira S."/>
            <person name="Hochstein R."/>
            <person name="Heidelberg J."/>
            <person name="Johnson J."/>
            <person name="Mead D."/>
            <person name="Pohorille A."/>
            <person name="Sarmiento M."/>
            <person name="Schweighofer K."/>
            <person name="Seshadri R."/>
            <person name="Voytek M.A."/>
        </authorList>
    </citation>
    <scope>NUCLEOTIDE SEQUENCE [LARGE SCALE GENOMIC DNA]</scope>
    <source>
        <strain>DSM 14350 / EX-H1</strain>
    </source>
</reference>
<feature type="chain" id="PRO_1000212354" description="UPF0235 protein PERMA_1406">
    <location>
        <begin position="1"/>
        <end position="73"/>
    </location>
</feature>
<keyword id="KW-1185">Reference proteome</keyword>